<reference key="1">
    <citation type="submission" date="2006-12" db="EMBL/GenBank/DDBJ databases">
        <title>Complete sequence of Chlorobium phaeobacteroides DSM 266.</title>
        <authorList>
            <consortium name="US DOE Joint Genome Institute"/>
            <person name="Copeland A."/>
            <person name="Lucas S."/>
            <person name="Lapidus A."/>
            <person name="Barry K."/>
            <person name="Detter J.C."/>
            <person name="Glavina del Rio T."/>
            <person name="Hammon N."/>
            <person name="Israni S."/>
            <person name="Pitluck S."/>
            <person name="Goltsman E."/>
            <person name="Schmutz J."/>
            <person name="Larimer F."/>
            <person name="Land M."/>
            <person name="Hauser L."/>
            <person name="Mikhailova N."/>
            <person name="Li T."/>
            <person name="Overmann J."/>
            <person name="Bryant D.A."/>
            <person name="Richardson P."/>
        </authorList>
    </citation>
    <scope>NUCLEOTIDE SEQUENCE [LARGE SCALE GENOMIC DNA]</scope>
    <source>
        <strain>DSM 266 / SMG 266 / 2430</strain>
    </source>
</reference>
<protein>
    <recommendedName>
        <fullName evidence="1">Probable glycine dehydrogenase (decarboxylating) subunit 1</fullName>
        <ecNumber evidence="1">1.4.4.2</ecNumber>
    </recommendedName>
    <alternativeName>
        <fullName evidence="1">Glycine cleavage system P-protein subunit 1</fullName>
    </alternativeName>
    <alternativeName>
        <fullName evidence="1">Glycine decarboxylase subunit 1</fullName>
    </alternativeName>
    <alternativeName>
        <fullName evidence="1">Glycine dehydrogenase (aminomethyl-transferring) subunit 1</fullName>
    </alternativeName>
</protein>
<sequence length="444" mass="47961">MPFIVNTDQDTREMLSVLGAASFDELIPDIPEEIRLKKALDLFPAMSEQEVKRLLEGLASSNTSTSDYVSYLGGGAYDHFIPSAIKTIVSRSEFYTAYTPYQAEVSQGTLQAIYEYQSLMCRLYDMDVANASMYDGATALAEAVLMAISVTGRQEVIVAGKLHPHYCEVLKTYLEAGGHSAVVQNTLENGVGTLDGLGALLTDRCAAVIVQQPNFYGSLEDVEAIGELAHSKGALFVVSADPVSLGLLAAPGSYGADIAVGEGQPLGNAQSFGGPYLGIFTVKQDLVRKIPGRLVGMTKDRNGDDGFILTLQTREQHIRREKATSNICTNQALNALHAAIYLSLLGKQGIIDVAEQSALKSHYLAEQIADIPGFSLKYSAPFFREFVVETPMAAREVISNLLEKKIFAGCDLSVYDEAGLLVAVTEKRTKAELDAFVEYLGALK</sequence>
<organism>
    <name type="scientific">Chlorobium phaeobacteroides (strain DSM 266 / SMG 266 / 2430)</name>
    <dbReference type="NCBI Taxonomy" id="290317"/>
    <lineage>
        <taxon>Bacteria</taxon>
        <taxon>Pseudomonadati</taxon>
        <taxon>Chlorobiota</taxon>
        <taxon>Chlorobiia</taxon>
        <taxon>Chlorobiales</taxon>
        <taxon>Chlorobiaceae</taxon>
        <taxon>Chlorobium/Pelodictyon group</taxon>
        <taxon>Chlorobium</taxon>
    </lineage>
</organism>
<accession>A1BE03</accession>
<proteinExistence type="inferred from homology"/>
<dbReference type="EC" id="1.4.4.2" evidence="1"/>
<dbReference type="EMBL" id="CP000492">
    <property type="protein sequence ID" value="ABL64630.1"/>
    <property type="molecule type" value="Genomic_DNA"/>
</dbReference>
<dbReference type="RefSeq" id="WP_011744463.1">
    <property type="nucleotide sequence ID" value="NC_008639.1"/>
</dbReference>
<dbReference type="SMR" id="A1BE03"/>
<dbReference type="STRING" id="290317.Cpha266_0574"/>
<dbReference type="KEGG" id="cph:Cpha266_0574"/>
<dbReference type="eggNOG" id="COG0403">
    <property type="taxonomic scope" value="Bacteria"/>
</dbReference>
<dbReference type="HOGENOM" id="CLU_004620_0_2_10"/>
<dbReference type="OrthoDB" id="9801272at2"/>
<dbReference type="Proteomes" id="UP000008701">
    <property type="component" value="Chromosome"/>
</dbReference>
<dbReference type="GO" id="GO:0004375">
    <property type="term" value="F:glycine dehydrogenase (decarboxylating) activity"/>
    <property type="evidence" value="ECO:0007669"/>
    <property type="project" value="UniProtKB-EC"/>
</dbReference>
<dbReference type="GO" id="GO:0019464">
    <property type="term" value="P:glycine decarboxylation via glycine cleavage system"/>
    <property type="evidence" value="ECO:0007669"/>
    <property type="project" value="UniProtKB-UniRule"/>
</dbReference>
<dbReference type="GO" id="GO:0009116">
    <property type="term" value="P:nucleoside metabolic process"/>
    <property type="evidence" value="ECO:0007669"/>
    <property type="project" value="InterPro"/>
</dbReference>
<dbReference type="CDD" id="cd00613">
    <property type="entry name" value="GDC-P"/>
    <property type="match status" value="1"/>
</dbReference>
<dbReference type="Gene3D" id="3.90.1150.10">
    <property type="entry name" value="Aspartate Aminotransferase, domain 1"/>
    <property type="match status" value="1"/>
</dbReference>
<dbReference type="Gene3D" id="3.40.640.10">
    <property type="entry name" value="Type I PLP-dependent aspartate aminotransferase-like (Major domain)"/>
    <property type="match status" value="1"/>
</dbReference>
<dbReference type="HAMAP" id="MF_00712">
    <property type="entry name" value="GcvPA"/>
    <property type="match status" value="1"/>
</dbReference>
<dbReference type="InterPro" id="IPR023010">
    <property type="entry name" value="GcvPA"/>
</dbReference>
<dbReference type="InterPro" id="IPR049315">
    <property type="entry name" value="GDC-P_N"/>
</dbReference>
<dbReference type="InterPro" id="IPR020581">
    <property type="entry name" value="GDC_P"/>
</dbReference>
<dbReference type="InterPro" id="IPR015424">
    <property type="entry name" value="PyrdxlP-dep_Trfase"/>
</dbReference>
<dbReference type="InterPro" id="IPR015421">
    <property type="entry name" value="PyrdxlP-dep_Trfase_major"/>
</dbReference>
<dbReference type="InterPro" id="IPR015422">
    <property type="entry name" value="PyrdxlP-dep_Trfase_small"/>
</dbReference>
<dbReference type="NCBIfam" id="NF001696">
    <property type="entry name" value="PRK00451.1"/>
    <property type="match status" value="1"/>
</dbReference>
<dbReference type="PANTHER" id="PTHR42806">
    <property type="entry name" value="GLYCINE CLEAVAGE SYSTEM P-PROTEIN"/>
    <property type="match status" value="1"/>
</dbReference>
<dbReference type="PANTHER" id="PTHR42806:SF1">
    <property type="entry name" value="GLYCINE DEHYDROGENASE (DECARBOXYLATING)"/>
    <property type="match status" value="1"/>
</dbReference>
<dbReference type="Pfam" id="PF02347">
    <property type="entry name" value="GDC-P"/>
    <property type="match status" value="1"/>
</dbReference>
<dbReference type="PIRSF" id="PIRSF006815">
    <property type="entry name" value="GcvPA"/>
    <property type="match status" value="1"/>
</dbReference>
<dbReference type="SUPFAM" id="SSF53383">
    <property type="entry name" value="PLP-dependent transferases"/>
    <property type="match status" value="1"/>
</dbReference>
<name>GCSPA_CHLPD</name>
<keyword id="KW-0560">Oxidoreductase</keyword>
<keyword id="KW-1185">Reference proteome</keyword>
<feature type="chain" id="PRO_1000045642" description="Probable glycine dehydrogenase (decarboxylating) subunit 1">
    <location>
        <begin position="1"/>
        <end position="444"/>
    </location>
</feature>
<gene>
    <name evidence="1" type="primary">gcvPA</name>
    <name type="ordered locus">Cpha266_0574</name>
</gene>
<comment type="function">
    <text evidence="1">The glycine cleavage system catalyzes the degradation of glycine. The P protein binds the alpha-amino group of glycine through its pyridoxal phosphate cofactor; CO(2) is released and the remaining methylamine moiety is then transferred to the lipoamide cofactor of the H protein.</text>
</comment>
<comment type="catalytic activity">
    <reaction evidence="1">
        <text>N(6)-[(R)-lipoyl]-L-lysyl-[glycine-cleavage complex H protein] + glycine + H(+) = N(6)-[(R)-S(8)-aminomethyldihydrolipoyl]-L-lysyl-[glycine-cleavage complex H protein] + CO2</text>
        <dbReference type="Rhea" id="RHEA:24304"/>
        <dbReference type="Rhea" id="RHEA-COMP:10494"/>
        <dbReference type="Rhea" id="RHEA-COMP:10495"/>
        <dbReference type="ChEBI" id="CHEBI:15378"/>
        <dbReference type="ChEBI" id="CHEBI:16526"/>
        <dbReference type="ChEBI" id="CHEBI:57305"/>
        <dbReference type="ChEBI" id="CHEBI:83099"/>
        <dbReference type="ChEBI" id="CHEBI:83143"/>
        <dbReference type="EC" id="1.4.4.2"/>
    </reaction>
</comment>
<comment type="subunit">
    <text evidence="1">The glycine cleavage system is composed of four proteins: P, T, L and H. In this organism, the P 'protein' is a heterodimer of two subunits.</text>
</comment>
<comment type="similarity">
    <text evidence="1">Belongs to the GcvP family. N-terminal subunit subfamily.</text>
</comment>
<evidence type="ECO:0000255" key="1">
    <source>
        <dbReference type="HAMAP-Rule" id="MF_00712"/>
    </source>
</evidence>